<organism>
    <name type="scientific">Streptococcus pneumoniae (strain 70585)</name>
    <dbReference type="NCBI Taxonomy" id="488221"/>
    <lineage>
        <taxon>Bacteria</taxon>
        <taxon>Bacillati</taxon>
        <taxon>Bacillota</taxon>
        <taxon>Bacilli</taxon>
        <taxon>Lactobacillales</taxon>
        <taxon>Streptococcaceae</taxon>
        <taxon>Streptococcus</taxon>
    </lineage>
</organism>
<gene>
    <name evidence="1" type="primary">rpsD</name>
    <name type="ordered locus">SP70585_0148</name>
</gene>
<name>RS4_STRP7</name>
<protein>
    <recommendedName>
        <fullName evidence="1">Small ribosomal subunit protein uS4</fullName>
    </recommendedName>
    <alternativeName>
        <fullName evidence="2">30S ribosomal protein S4</fullName>
    </alternativeName>
</protein>
<proteinExistence type="inferred from homology"/>
<sequence>MSRYTGPSWKQARRLGLSLTGTGKELARRNYVPGQHGPNNRSKLSEYGLQLAEKQKLRFTYGVGEKQFRNLFVQATKIKGGILGFNFMLLLERRLDNVVYRLGLATTRRQARQFVNHGHILVDGKRVDIPSYRVTPGQVISVREKSLKVPAILEAVEATLGRPAFVSFDAEKLEGSLTRLPERDEINPEINEALVVEFYNKML</sequence>
<comment type="function">
    <text evidence="1">One of the primary rRNA binding proteins, it binds directly to 16S rRNA where it nucleates assembly of the body of the 30S subunit.</text>
</comment>
<comment type="function">
    <text evidence="1">With S5 and S12 plays an important role in translational accuracy.</text>
</comment>
<comment type="subunit">
    <text evidence="1">Part of the 30S ribosomal subunit. Contacts protein S5. The interaction surface between S4 and S5 is involved in control of translational fidelity.</text>
</comment>
<comment type="similarity">
    <text evidence="1">Belongs to the universal ribosomal protein uS4 family.</text>
</comment>
<evidence type="ECO:0000255" key="1">
    <source>
        <dbReference type="HAMAP-Rule" id="MF_01306"/>
    </source>
</evidence>
<evidence type="ECO:0000305" key="2"/>
<feature type="chain" id="PRO_1000165426" description="Small ribosomal subunit protein uS4">
    <location>
        <begin position="1"/>
        <end position="203"/>
    </location>
</feature>
<feature type="domain" description="S4 RNA-binding" evidence="1">
    <location>
        <begin position="93"/>
        <end position="156"/>
    </location>
</feature>
<reference key="1">
    <citation type="journal article" date="2010" name="Genome Biol.">
        <title>Structure and dynamics of the pan-genome of Streptococcus pneumoniae and closely related species.</title>
        <authorList>
            <person name="Donati C."/>
            <person name="Hiller N.L."/>
            <person name="Tettelin H."/>
            <person name="Muzzi A."/>
            <person name="Croucher N.J."/>
            <person name="Angiuoli S.V."/>
            <person name="Oggioni M."/>
            <person name="Dunning Hotopp J.C."/>
            <person name="Hu F.Z."/>
            <person name="Riley D.R."/>
            <person name="Covacci A."/>
            <person name="Mitchell T.J."/>
            <person name="Bentley S.D."/>
            <person name="Kilian M."/>
            <person name="Ehrlich G.D."/>
            <person name="Rappuoli R."/>
            <person name="Moxon E.R."/>
            <person name="Masignani V."/>
        </authorList>
    </citation>
    <scope>NUCLEOTIDE SEQUENCE [LARGE SCALE GENOMIC DNA]</scope>
    <source>
        <strain>70585</strain>
    </source>
</reference>
<keyword id="KW-0687">Ribonucleoprotein</keyword>
<keyword id="KW-0689">Ribosomal protein</keyword>
<keyword id="KW-0694">RNA-binding</keyword>
<keyword id="KW-0699">rRNA-binding</keyword>
<accession>C1C9Y5</accession>
<dbReference type="EMBL" id="CP000918">
    <property type="protein sequence ID" value="ACO15889.1"/>
    <property type="molecule type" value="Genomic_DNA"/>
</dbReference>
<dbReference type="RefSeq" id="WP_000092756.1">
    <property type="nucleotide sequence ID" value="NC_012468.1"/>
</dbReference>
<dbReference type="SMR" id="C1C9Y5"/>
<dbReference type="GeneID" id="93738707"/>
<dbReference type="KEGG" id="snm:SP70585_0148"/>
<dbReference type="HOGENOM" id="CLU_092403_0_1_9"/>
<dbReference type="Proteomes" id="UP000002211">
    <property type="component" value="Chromosome"/>
</dbReference>
<dbReference type="GO" id="GO:0015935">
    <property type="term" value="C:small ribosomal subunit"/>
    <property type="evidence" value="ECO:0007669"/>
    <property type="project" value="InterPro"/>
</dbReference>
<dbReference type="GO" id="GO:0019843">
    <property type="term" value="F:rRNA binding"/>
    <property type="evidence" value="ECO:0007669"/>
    <property type="project" value="UniProtKB-UniRule"/>
</dbReference>
<dbReference type="GO" id="GO:0003735">
    <property type="term" value="F:structural constituent of ribosome"/>
    <property type="evidence" value="ECO:0007669"/>
    <property type="project" value="InterPro"/>
</dbReference>
<dbReference type="GO" id="GO:0042274">
    <property type="term" value="P:ribosomal small subunit biogenesis"/>
    <property type="evidence" value="ECO:0007669"/>
    <property type="project" value="TreeGrafter"/>
</dbReference>
<dbReference type="GO" id="GO:0006412">
    <property type="term" value="P:translation"/>
    <property type="evidence" value="ECO:0007669"/>
    <property type="project" value="UniProtKB-UniRule"/>
</dbReference>
<dbReference type="CDD" id="cd00165">
    <property type="entry name" value="S4"/>
    <property type="match status" value="1"/>
</dbReference>
<dbReference type="FunFam" id="1.10.1050.10:FF:000001">
    <property type="entry name" value="30S ribosomal protein S4"/>
    <property type="match status" value="1"/>
</dbReference>
<dbReference type="FunFam" id="3.10.290.10:FF:000001">
    <property type="entry name" value="30S ribosomal protein S4"/>
    <property type="match status" value="1"/>
</dbReference>
<dbReference type="Gene3D" id="1.10.1050.10">
    <property type="entry name" value="Ribosomal Protein S4 Delta 41, Chain A, domain 1"/>
    <property type="match status" value="1"/>
</dbReference>
<dbReference type="Gene3D" id="3.10.290.10">
    <property type="entry name" value="RNA-binding S4 domain"/>
    <property type="match status" value="1"/>
</dbReference>
<dbReference type="HAMAP" id="MF_01306_B">
    <property type="entry name" value="Ribosomal_uS4_B"/>
    <property type="match status" value="1"/>
</dbReference>
<dbReference type="InterPro" id="IPR022801">
    <property type="entry name" value="Ribosomal_uS4"/>
</dbReference>
<dbReference type="InterPro" id="IPR005709">
    <property type="entry name" value="Ribosomal_uS4_bac-type"/>
</dbReference>
<dbReference type="InterPro" id="IPR018079">
    <property type="entry name" value="Ribosomal_uS4_CS"/>
</dbReference>
<dbReference type="InterPro" id="IPR001912">
    <property type="entry name" value="Ribosomal_uS4_N"/>
</dbReference>
<dbReference type="InterPro" id="IPR002942">
    <property type="entry name" value="S4_RNA-bd"/>
</dbReference>
<dbReference type="InterPro" id="IPR036986">
    <property type="entry name" value="S4_RNA-bd_sf"/>
</dbReference>
<dbReference type="NCBIfam" id="NF003717">
    <property type="entry name" value="PRK05327.1"/>
    <property type="match status" value="1"/>
</dbReference>
<dbReference type="NCBIfam" id="TIGR01017">
    <property type="entry name" value="rpsD_bact"/>
    <property type="match status" value="1"/>
</dbReference>
<dbReference type="PANTHER" id="PTHR11831">
    <property type="entry name" value="30S 40S RIBOSOMAL PROTEIN"/>
    <property type="match status" value="1"/>
</dbReference>
<dbReference type="PANTHER" id="PTHR11831:SF4">
    <property type="entry name" value="SMALL RIBOSOMAL SUBUNIT PROTEIN US4M"/>
    <property type="match status" value="1"/>
</dbReference>
<dbReference type="Pfam" id="PF00163">
    <property type="entry name" value="Ribosomal_S4"/>
    <property type="match status" value="1"/>
</dbReference>
<dbReference type="Pfam" id="PF01479">
    <property type="entry name" value="S4"/>
    <property type="match status" value="1"/>
</dbReference>
<dbReference type="SMART" id="SM01390">
    <property type="entry name" value="Ribosomal_S4"/>
    <property type="match status" value="1"/>
</dbReference>
<dbReference type="SMART" id="SM00363">
    <property type="entry name" value="S4"/>
    <property type="match status" value="1"/>
</dbReference>
<dbReference type="SUPFAM" id="SSF55174">
    <property type="entry name" value="Alpha-L RNA-binding motif"/>
    <property type="match status" value="1"/>
</dbReference>
<dbReference type="PROSITE" id="PS00632">
    <property type="entry name" value="RIBOSOMAL_S4"/>
    <property type="match status" value="1"/>
</dbReference>
<dbReference type="PROSITE" id="PS50889">
    <property type="entry name" value="S4"/>
    <property type="match status" value="1"/>
</dbReference>